<reference key="1">
    <citation type="submission" date="2007-03" db="EMBL/GenBank/DDBJ databases">
        <title>Complete sequence of Shewanella loihica PV-4.</title>
        <authorList>
            <consortium name="US DOE Joint Genome Institute"/>
            <person name="Copeland A."/>
            <person name="Lucas S."/>
            <person name="Lapidus A."/>
            <person name="Barry K."/>
            <person name="Detter J.C."/>
            <person name="Glavina del Rio T."/>
            <person name="Hammon N."/>
            <person name="Israni S."/>
            <person name="Dalin E."/>
            <person name="Tice H."/>
            <person name="Pitluck S."/>
            <person name="Chain P."/>
            <person name="Malfatti S."/>
            <person name="Shin M."/>
            <person name="Vergez L."/>
            <person name="Schmutz J."/>
            <person name="Larimer F."/>
            <person name="Land M."/>
            <person name="Hauser L."/>
            <person name="Kyrpides N."/>
            <person name="Mikhailova N."/>
            <person name="Romine M.F."/>
            <person name="Serres G."/>
            <person name="Fredrickson J."/>
            <person name="Tiedje J."/>
            <person name="Richardson P."/>
        </authorList>
    </citation>
    <scope>NUCLEOTIDE SEQUENCE [LARGE SCALE GENOMIC DNA]</scope>
    <source>
        <strain>ATCC BAA-1088 / PV-4</strain>
    </source>
</reference>
<dbReference type="EMBL" id="CP000606">
    <property type="protein sequence ID" value="ABO24692.1"/>
    <property type="molecule type" value="Genomic_DNA"/>
</dbReference>
<dbReference type="RefSeq" id="WP_011866623.1">
    <property type="nucleotide sequence ID" value="NC_009092.1"/>
</dbReference>
<dbReference type="SMR" id="A3QGU4"/>
<dbReference type="STRING" id="323850.Shew_2826"/>
<dbReference type="KEGG" id="slo:Shew_2826"/>
<dbReference type="eggNOG" id="COG0858">
    <property type="taxonomic scope" value="Bacteria"/>
</dbReference>
<dbReference type="HOGENOM" id="CLU_089475_5_0_6"/>
<dbReference type="OrthoDB" id="307788at2"/>
<dbReference type="Proteomes" id="UP000001558">
    <property type="component" value="Chromosome"/>
</dbReference>
<dbReference type="GO" id="GO:0005829">
    <property type="term" value="C:cytosol"/>
    <property type="evidence" value="ECO:0007669"/>
    <property type="project" value="TreeGrafter"/>
</dbReference>
<dbReference type="GO" id="GO:0043024">
    <property type="term" value="F:ribosomal small subunit binding"/>
    <property type="evidence" value="ECO:0007669"/>
    <property type="project" value="TreeGrafter"/>
</dbReference>
<dbReference type="GO" id="GO:0030490">
    <property type="term" value="P:maturation of SSU-rRNA"/>
    <property type="evidence" value="ECO:0007669"/>
    <property type="project" value="UniProtKB-UniRule"/>
</dbReference>
<dbReference type="FunFam" id="3.30.300.20:FF:000007">
    <property type="entry name" value="Ribosome-binding factor A"/>
    <property type="match status" value="1"/>
</dbReference>
<dbReference type="Gene3D" id="3.30.300.20">
    <property type="match status" value="1"/>
</dbReference>
<dbReference type="HAMAP" id="MF_00003">
    <property type="entry name" value="RbfA"/>
    <property type="match status" value="1"/>
</dbReference>
<dbReference type="InterPro" id="IPR015946">
    <property type="entry name" value="KH_dom-like_a/b"/>
</dbReference>
<dbReference type="InterPro" id="IPR000238">
    <property type="entry name" value="RbfA"/>
</dbReference>
<dbReference type="InterPro" id="IPR023799">
    <property type="entry name" value="RbfA_dom_sf"/>
</dbReference>
<dbReference type="InterPro" id="IPR020053">
    <property type="entry name" value="Ribosome-bd_factorA_CS"/>
</dbReference>
<dbReference type="NCBIfam" id="TIGR00082">
    <property type="entry name" value="rbfA"/>
    <property type="match status" value="1"/>
</dbReference>
<dbReference type="PANTHER" id="PTHR33515">
    <property type="entry name" value="RIBOSOME-BINDING FACTOR A, CHLOROPLASTIC-RELATED"/>
    <property type="match status" value="1"/>
</dbReference>
<dbReference type="PANTHER" id="PTHR33515:SF1">
    <property type="entry name" value="RIBOSOME-BINDING FACTOR A, CHLOROPLASTIC-RELATED"/>
    <property type="match status" value="1"/>
</dbReference>
<dbReference type="Pfam" id="PF02033">
    <property type="entry name" value="RBFA"/>
    <property type="match status" value="1"/>
</dbReference>
<dbReference type="SUPFAM" id="SSF89919">
    <property type="entry name" value="Ribosome-binding factor A, RbfA"/>
    <property type="match status" value="1"/>
</dbReference>
<dbReference type="PROSITE" id="PS01319">
    <property type="entry name" value="RBFA"/>
    <property type="match status" value="1"/>
</dbReference>
<sequence length="140" mass="16037">MAREFSRTRRIAQQLQQELAQVLQRDIKDPRIGMVTVNDVDVSRDLNYAKVYVTFFEEDKAVVEEKLAALEAAAGYVRSLVAGRMKLRVMPEIRFIYDASLIEGMRMSNLVSQVITKDKAKAAEHGREDEELDDTEQDDK</sequence>
<name>RBFA_SHELP</name>
<feature type="chain" id="PRO_1000000203" description="Ribosome-binding factor A">
    <location>
        <begin position="1"/>
        <end position="140"/>
    </location>
</feature>
<feature type="region of interest" description="Disordered" evidence="2">
    <location>
        <begin position="121"/>
        <end position="140"/>
    </location>
</feature>
<feature type="compositionally biased region" description="Acidic residues" evidence="2">
    <location>
        <begin position="129"/>
        <end position="140"/>
    </location>
</feature>
<keyword id="KW-0963">Cytoplasm</keyword>
<keyword id="KW-1185">Reference proteome</keyword>
<keyword id="KW-0690">Ribosome biogenesis</keyword>
<evidence type="ECO:0000255" key="1">
    <source>
        <dbReference type="HAMAP-Rule" id="MF_00003"/>
    </source>
</evidence>
<evidence type="ECO:0000256" key="2">
    <source>
        <dbReference type="SAM" id="MobiDB-lite"/>
    </source>
</evidence>
<accession>A3QGU4</accession>
<proteinExistence type="inferred from homology"/>
<organism>
    <name type="scientific">Shewanella loihica (strain ATCC BAA-1088 / PV-4)</name>
    <dbReference type="NCBI Taxonomy" id="323850"/>
    <lineage>
        <taxon>Bacteria</taxon>
        <taxon>Pseudomonadati</taxon>
        <taxon>Pseudomonadota</taxon>
        <taxon>Gammaproteobacteria</taxon>
        <taxon>Alteromonadales</taxon>
        <taxon>Shewanellaceae</taxon>
        <taxon>Shewanella</taxon>
    </lineage>
</organism>
<gene>
    <name evidence="1" type="primary">rbfA</name>
    <name type="ordered locus">Shew_2826</name>
</gene>
<comment type="function">
    <text evidence="1">One of several proteins that assist in the late maturation steps of the functional core of the 30S ribosomal subunit. Associates with free 30S ribosomal subunits (but not with 30S subunits that are part of 70S ribosomes or polysomes). Required for efficient processing of 16S rRNA. May interact with the 5'-terminal helix region of 16S rRNA.</text>
</comment>
<comment type="subunit">
    <text evidence="1">Monomer. Binds 30S ribosomal subunits, but not 50S ribosomal subunits or 70S ribosomes.</text>
</comment>
<comment type="subcellular location">
    <subcellularLocation>
        <location evidence="1">Cytoplasm</location>
    </subcellularLocation>
</comment>
<comment type="similarity">
    <text evidence="1">Belongs to the RbfA family.</text>
</comment>
<protein>
    <recommendedName>
        <fullName evidence="1">Ribosome-binding factor A</fullName>
    </recommendedName>
</protein>